<sequence>MATKFPKFSQALAQDPATRRIWYGIATAHDLESHDGMTEENLYQKIFASHFGHLAIIFLWTSGNLFHVAWQGNFQQWVLNPLKVKPIAHAIWDPHFGQSAIKAFTRGGVSYPVNIATSGVYHWWYTVGMRTNEDLYFGALGLLVLSTTLLFAGWLHLQPKFRPGIAWFKNNESRLNHHLSGLFGVSSLAWSGHLIHVAIPESRGQHIRWNNFTSTLPHPEGLTPFFTGNWGLYAENPDTAQHIFGTSEGAGTAILTFLGGFHPQTQSMWLTDIAHHHLAIAVVFIFAGHMYRTNWGIGHSMKEILDAHVPPKGRLGAGHRGLFETITDSLHMQLGLALASLGVATSLVAQHMYALPSYAFMAKDYVTQAALYTHHQYIAGFLMVGAFAHGAIFFVRDYDPEVNKDNVLARMLQHKEAIISHLSWVSLFLGFHTLGLYIHNDVCVAFGTPEKQILFEPVFAQFIQAASGKALYGFDVLLSSSTSAASVASSKIWLPGWMEAINSGKNSLFLTIGPGDFLVHHAIALGLHTTTLILVKGALDARGSKLMPDKKDFGYSFPCDGPGRGGTCDISAWDAFYLAMFWMLNTISWVTFYWHWKHLTVWGGNAAAFNESSTYIMGWLRDYLWLNSSPLINGYNAFGMNAQAVWAWMFLFGHLIWATGFMFLISWRGYWQELIETLVWAHERTPIANLVKWRDKPVALSIVQARLVGLAHFTVGFIFTFAPFVIASTTGKFA</sequence>
<gene>
    <name evidence="1" type="primary">psaB</name>
</gene>
<evidence type="ECO:0000255" key="1">
    <source>
        <dbReference type="HAMAP-Rule" id="MF_00482"/>
    </source>
</evidence>
<proteinExistence type="inferred from homology"/>
<accession>Q4G3F5</accession>
<feature type="chain" id="PRO_0000277140" description="Photosystem I P700 chlorophyll a apoprotein A2">
    <location>
        <begin position="1"/>
        <end position="734"/>
    </location>
</feature>
<feature type="transmembrane region" description="Helical; Name=I" evidence="1">
    <location>
        <begin position="46"/>
        <end position="69"/>
    </location>
</feature>
<feature type="transmembrane region" description="Helical; Name=II" evidence="1">
    <location>
        <begin position="135"/>
        <end position="158"/>
    </location>
</feature>
<feature type="transmembrane region" description="Helical; Name=III" evidence="1">
    <location>
        <begin position="175"/>
        <end position="199"/>
    </location>
</feature>
<feature type="transmembrane region" description="Helical; Name=IV" evidence="1">
    <location>
        <begin position="273"/>
        <end position="291"/>
    </location>
</feature>
<feature type="transmembrane region" description="Helical; Name=V" evidence="1">
    <location>
        <begin position="330"/>
        <end position="353"/>
    </location>
</feature>
<feature type="transmembrane region" description="Helical; Name=VI" evidence="1">
    <location>
        <begin position="369"/>
        <end position="395"/>
    </location>
</feature>
<feature type="transmembrane region" description="Helical; Name=VII" evidence="1">
    <location>
        <begin position="417"/>
        <end position="439"/>
    </location>
</feature>
<feature type="transmembrane region" description="Helical; Name=VIII" evidence="1">
    <location>
        <begin position="517"/>
        <end position="535"/>
    </location>
</feature>
<feature type="transmembrane region" description="Helical; Name=IX" evidence="1">
    <location>
        <begin position="575"/>
        <end position="596"/>
    </location>
</feature>
<feature type="transmembrane region" description="Helical; Name=X" evidence="1">
    <location>
        <begin position="643"/>
        <end position="665"/>
    </location>
</feature>
<feature type="transmembrane region" description="Helical; Name=XI" evidence="1">
    <location>
        <begin position="707"/>
        <end position="727"/>
    </location>
</feature>
<feature type="binding site" evidence="1">
    <location>
        <position position="559"/>
    </location>
    <ligand>
        <name>[4Fe-4S] cluster</name>
        <dbReference type="ChEBI" id="CHEBI:49883"/>
        <note>ligand shared between dimeric partners</note>
    </ligand>
</feature>
<feature type="binding site" evidence="1">
    <location>
        <position position="568"/>
    </location>
    <ligand>
        <name>[4Fe-4S] cluster</name>
        <dbReference type="ChEBI" id="CHEBI:49883"/>
        <note>ligand shared between dimeric partners</note>
    </ligand>
</feature>
<feature type="binding site" description="axial binding residue" evidence="1">
    <location>
        <position position="654"/>
    </location>
    <ligand>
        <name>chlorophyll a</name>
        <dbReference type="ChEBI" id="CHEBI:58416"/>
        <label>B1</label>
    </ligand>
    <ligandPart>
        <name>Mg</name>
        <dbReference type="ChEBI" id="CHEBI:25107"/>
    </ligandPart>
</feature>
<feature type="binding site" description="axial binding residue" evidence="1">
    <location>
        <position position="662"/>
    </location>
    <ligand>
        <name>chlorophyll a</name>
        <dbReference type="ChEBI" id="CHEBI:58416"/>
        <label>B3</label>
    </ligand>
    <ligandPart>
        <name>Mg</name>
        <dbReference type="ChEBI" id="CHEBI:25107"/>
    </ligandPart>
</feature>
<feature type="binding site" evidence="1">
    <location>
        <position position="670"/>
    </location>
    <ligand>
        <name>chlorophyll a</name>
        <dbReference type="ChEBI" id="CHEBI:58416"/>
        <label>B3</label>
    </ligand>
</feature>
<feature type="binding site" evidence="1">
    <location>
        <position position="671"/>
    </location>
    <ligand>
        <name>phylloquinone</name>
        <dbReference type="ChEBI" id="CHEBI:18067"/>
        <label>B</label>
    </ligand>
</feature>
<reference key="1">
    <citation type="journal article" date="2005" name="DNA Res.">
        <title>The complete plastid genome sequence of the haptophyte Emiliania huxleyi: a comparison to other plastid genomes.</title>
        <authorList>
            <person name="Sanchez-Puerta M.V."/>
            <person name="Bachvaroff T.R."/>
            <person name="Delwiche C.F."/>
        </authorList>
    </citation>
    <scope>NUCLEOTIDE SEQUENCE [LARGE SCALE GENOMIC DNA]</scope>
    <source>
        <strain>CCMP373 / CSIRO-CS-57 / BT6</strain>
    </source>
</reference>
<organism>
    <name type="scientific">Emiliania huxleyi</name>
    <name type="common">Coccolithophore</name>
    <name type="synonym">Pontosphaera huxleyi</name>
    <dbReference type="NCBI Taxonomy" id="2903"/>
    <lineage>
        <taxon>Eukaryota</taxon>
        <taxon>Haptista</taxon>
        <taxon>Haptophyta</taxon>
        <taxon>Prymnesiophyceae</taxon>
        <taxon>Isochrysidales</taxon>
        <taxon>Noelaerhabdaceae</taxon>
        <taxon>Emiliania</taxon>
    </lineage>
</organism>
<keyword id="KW-0004">4Fe-4S</keyword>
<keyword id="KW-0148">Chlorophyll</keyword>
<keyword id="KW-0150">Chloroplast</keyword>
<keyword id="KW-0157">Chromophore</keyword>
<keyword id="KW-0249">Electron transport</keyword>
<keyword id="KW-0408">Iron</keyword>
<keyword id="KW-0411">Iron-sulfur</keyword>
<keyword id="KW-0460">Magnesium</keyword>
<keyword id="KW-0472">Membrane</keyword>
<keyword id="KW-0479">Metal-binding</keyword>
<keyword id="KW-0560">Oxidoreductase</keyword>
<keyword id="KW-0602">Photosynthesis</keyword>
<keyword id="KW-0603">Photosystem I</keyword>
<keyword id="KW-0934">Plastid</keyword>
<keyword id="KW-0793">Thylakoid</keyword>
<keyword id="KW-0812">Transmembrane</keyword>
<keyword id="KW-1133">Transmembrane helix</keyword>
<keyword id="KW-0813">Transport</keyword>
<dbReference type="EC" id="1.97.1.12" evidence="1"/>
<dbReference type="EMBL" id="AY741371">
    <property type="protein sequence ID" value="AAX13811.1"/>
    <property type="molecule type" value="Genomic_DNA"/>
</dbReference>
<dbReference type="RefSeq" id="YP_277312.1">
    <property type="nucleotide sequence ID" value="NC_007288.1"/>
</dbReference>
<dbReference type="SMR" id="Q4G3F5"/>
<dbReference type="STRING" id="2903.Q4G3F5"/>
<dbReference type="GeneID" id="3562546"/>
<dbReference type="GO" id="GO:0009535">
    <property type="term" value="C:chloroplast thylakoid membrane"/>
    <property type="evidence" value="ECO:0007669"/>
    <property type="project" value="UniProtKB-SubCell"/>
</dbReference>
<dbReference type="GO" id="GO:0009522">
    <property type="term" value="C:photosystem I"/>
    <property type="evidence" value="ECO:0007669"/>
    <property type="project" value="UniProtKB-KW"/>
</dbReference>
<dbReference type="GO" id="GO:0051539">
    <property type="term" value="F:4 iron, 4 sulfur cluster binding"/>
    <property type="evidence" value="ECO:0007669"/>
    <property type="project" value="UniProtKB-KW"/>
</dbReference>
<dbReference type="GO" id="GO:0016168">
    <property type="term" value="F:chlorophyll binding"/>
    <property type="evidence" value="ECO:0007669"/>
    <property type="project" value="UniProtKB-KW"/>
</dbReference>
<dbReference type="GO" id="GO:0009055">
    <property type="term" value="F:electron transfer activity"/>
    <property type="evidence" value="ECO:0007669"/>
    <property type="project" value="UniProtKB-UniRule"/>
</dbReference>
<dbReference type="GO" id="GO:0000287">
    <property type="term" value="F:magnesium ion binding"/>
    <property type="evidence" value="ECO:0007669"/>
    <property type="project" value="UniProtKB-UniRule"/>
</dbReference>
<dbReference type="GO" id="GO:0016491">
    <property type="term" value="F:oxidoreductase activity"/>
    <property type="evidence" value="ECO:0007669"/>
    <property type="project" value="UniProtKB-KW"/>
</dbReference>
<dbReference type="GO" id="GO:0015979">
    <property type="term" value="P:photosynthesis"/>
    <property type="evidence" value="ECO:0007669"/>
    <property type="project" value="UniProtKB-UniRule"/>
</dbReference>
<dbReference type="FunFam" id="1.20.1130.10:FF:000001">
    <property type="entry name" value="Photosystem I P700 chlorophyll a apoprotein A2"/>
    <property type="match status" value="1"/>
</dbReference>
<dbReference type="Gene3D" id="1.20.1130.10">
    <property type="entry name" value="Photosystem I PsaA/PsaB"/>
    <property type="match status" value="1"/>
</dbReference>
<dbReference type="HAMAP" id="MF_00482">
    <property type="entry name" value="PSI_PsaB"/>
    <property type="match status" value="1"/>
</dbReference>
<dbReference type="InterPro" id="IPR001280">
    <property type="entry name" value="PSI_PsaA/B"/>
</dbReference>
<dbReference type="InterPro" id="IPR020586">
    <property type="entry name" value="PSI_PsaA/B_CS"/>
</dbReference>
<dbReference type="InterPro" id="IPR036408">
    <property type="entry name" value="PSI_PsaA/B_sf"/>
</dbReference>
<dbReference type="InterPro" id="IPR006244">
    <property type="entry name" value="PSI_PsaB"/>
</dbReference>
<dbReference type="NCBIfam" id="TIGR01336">
    <property type="entry name" value="psaB"/>
    <property type="match status" value="1"/>
</dbReference>
<dbReference type="PANTHER" id="PTHR30128">
    <property type="entry name" value="OUTER MEMBRANE PROTEIN, OMPA-RELATED"/>
    <property type="match status" value="1"/>
</dbReference>
<dbReference type="PANTHER" id="PTHR30128:SF19">
    <property type="entry name" value="PHOTOSYSTEM I P700 CHLOROPHYLL A APOPROTEIN A1-RELATED"/>
    <property type="match status" value="1"/>
</dbReference>
<dbReference type="Pfam" id="PF00223">
    <property type="entry name" value="PsaA_PsaB"/>
    <property type="match status" value="1"/>
</dbReference>
<dbReference type="PIRSF" id="PIRSF002905">
    <property type="entry name" value="PSI_A"/>
    <property type="match status" value="1"/>
</dbReference>
<dbReference type="PRINTS" id="PR00257">
    <property type="entry name" value="PHOTSYSPSAAB"/>
</dbReference>
<dbReference type="SUPFAM" id="SSF81558">
    <property type="entry name" value="Photosystem I subunits PsaA/PsaB"/>
    <property type="match status" value="1"/>
</dbReference>
<dbReference type="PROSITE" id="PS00419">
    <property type="entry name" value="PHOTOSYSTEM_I_PSAAB"/>
    <property type="match status" value="1"/>
</dbReference>
<geneLocation type="chloroplast"/>
<name>PSAB_EMIHU</name>
<protein>
    <recommendedName>
        <fullName evidence="1">Photosystem I P700 chlorophyll a apoprotein A2</fullName>
        <ecNumber evidence="1">1.97.1.12</ecNumber>
    </recommendedName>
    <alternativeName>
        <fullName evidence="1">PSI-B</fullName>
    </alternativeName>
    <alternativeName>
        <fullName evidence="1">PsaB</fullName>
    </alternativeName>
</protein>
<comment type="function">
    <text evidence="1">PsaA and PsaB bind P700, the primary electron donor of photosystem I (PSI), as well as the electron acceptors A0, A1 and FX. PSI is a plastocyanin/cytochrome c6-ferredoxin oxidoreductase, converting photonic excitation into a charge separation, which transfers an electron from the donor P700 chlorophyll pair to the spectroscopically characterized acceptors A0, A1, FX, FA and FB in turn. Oxidized P700 is reduced on the lumenal side of the thylakoid membrane by plastocyanin or cytochrome c6.</text>
</comment>
<comment type="catalytic activity">
    <reaction evidence="1">
        <text>reduced [plastocyanin] + hnu + oxidized [2Fe-2S]-[ferredoxin] = oxidized [plastocyanin] + reduced [2Fe-2S]-[ferredoxin]</text>
        <dbReference type="Rhea" id="RHEA:30407"/>
        <dbReference type="Rhea" id="RHEA-COMP:10000"/>
        <dbReference type="Rhea" id="RHEA-COMP:10001"/>
        <dbReference type="Rhea" id="RHEA-COMP:10039"/>
        <dbReference type="Rhea" id="RHEA-COMP:10040"/>
        <dbReference type="ChEBI" id="CHEBI:29036"/>
        <dbReference type="ChEBI" id="CHEBI:30212"/>
        <dbReference type="ChEBI" id="CHEBI:33737"/>
        <dbReference type="ChEBI" id="CHEBI:33738"/>
        <dbReference type="ChEBI" id="CHEBI:49552"/>
        <dbReference type="EC" id="1.97.1.12"/>
    </reaction>
</comment>
<comment type="cofactor">
    <text evidence="1">P700 is a chlorophyll a/chlorophyll a' dimer, A0 is one or more chlorophyll a, A1 is one or both phylloquinones and FX is a shared 4Fe-4S iron-sulfur center.</text>
</comment>
<comment type="subunit">
    <text evidence="1">The PsaA/B heterodimer binds the P700 chlorophyll special pair and subsequent electron acceptors. PSI consists of a core antenna complex that captures photons, and an electron transfer chain that converts photonic excitation into a charge separation. The eukaryotic PSI reaction center is composed of at least 11 subunits.</text>
</comment>
<comment type="subcellular location">
    <subcellularLocation>
        <location>Plastid</location>
        <location>Chloroplast thylakoid membrane</location>
        <topology>Multi-pass membrane protein</topology>
    </subcellularLocation>
</comment>
<comment type="similarity">
    <text evidence="1">Belongs to the PsaA/PsaB family.</text>
</comment>